<evidence type="ECO:0000255" key="1">
    <source>
        <dbReference type="HAMAP-Rule" id="MF_01523"/>
    </source>
</evidence>
<evidence type="ECO:0000256" key="2">
    <source>
        <dbReference type="SAM" id="MobiDB-lite"/>
    </source>
</evidence>
<sequence length="255" mass="27557">MSDTRISIRYASEDLRERAEALAAELNLPLAGESAGTPLVLILDGHGLSLALTAPDAPGPIQVDFVTGRLGYRQARISLRSEPLARAVGIKDSERPSVVDATAGLGRDGFVLASLGCEVTLLEREPVIAALLADGLERAARDADLAQTIARMHLVTGNARDWLTALDEAPRPDVIYLDPMYPHRDKSALVKKEMRVFRTLVGDDQDAPETLEAALAVAKRRVVVKRPARAEPLSGRKPSHQIPGKTTRFDVYVTG</sequence>
<organism>
    <name type="scientific">Thioalkalivibrio sulfidiphilus (strain HL-EbGR7)</name>
    <dbReference type="NCBI Taxonomy" id="396588"/>
    <lineage>
        <taxon>Bacteria</taxon>
        <taxon>Pseudomonadati</taxon>
        <taxon>Pseudomonadota</taxon>
        <taxon>Gammaproteobacteria</taxon>
        <taxon>Chromatiales</taxon>
        <taxon>Ectothiorhodospiraceae</taxon>
        <taxon>Thioalkalivibrio</taxon>
    </lineage>
</organism>
<dbReference type="EC" id="2.1.1.242" evidence="1"/>
<dbReference type="EMBL" id="CP001339">
    <property type="protein sequence ID" value="ACL72285.1"/>
    <property type="molecule type" value="Genomic_DNA"/>
</dbReference>
<dbReference type="RefSeq" id="WP_012637768.1">
    <property type="nucleotide sequence ID" value="NC_011901.1"/>
</dbReference>
<dbReference type="SMR" id="B8GQ90"/>
<dbReference type="STRING" id="396588.Tgr7_1199"/>
<dbReference type="KEGG" id="tgr:Tgr7_1199"/>
<dbReference type="eggNOG" id="COG0742">
    <property type="taxonomic scope" value="Bacteria"/>
</dbReference>
<dbReference type="HOGENOM" id="CLU_076324_0_1_6"/>
<dbReference type="OrthoDB" id="3191794at2"/>
<dbReference type="Proteomes" id="UP000002383">
    <property type="component" value="Chromosome"/>
</dbReference>
<dbReference type="GO" id="GO:0005737">
    <property type="term" value="C:cytoplasm"/>
    <property type="evidence" value="ECO:0007669"/>
    <property type="project" value="UniProtKB-SubCell"/>
</dbReference>
<dbReference type="GO" id="GO:0008990">
    <property type="term" value="F:rRNA (guanine-N2-)-methyltransferase activity"/>
    <property type="evidence" value="ECO:0007669"/>
    <property type="project" value="UniProtKB-UniRule"/>
</dbReference>
<dbReference type="CDD" id="cd02440">
    <property type="entry name" value="AdoMet_MTases"/>
    <property type="match status" value="1"/>
</dbReference>
<dbReference type="Gene3D" id="3.40.50.150">
    <property type="entry name" value="Vaccinia Virus protein VP39"/>
    <property type="match status" value="1"/>
</dbReference>
<dbReference type="HAMAP" id="MF_01523">
    <property type="entry name" value="16SrRNA_methyltr_J"/>
    <property type="match status" value="1"/>
</dbReference>
<dbReference type="InterPro" id="IPR007536">
    <property type="entry name" value="16SrRNA_methylTrfase_J"/>
</dbReference>
<dbReference type="InterPro" id="IPR029063">
    <property type="entry name" value="SAM-dependent_MTases_sf"/>
</dbReference>
<dbReference type="PANTHER" id="PTHR36112">
    <property type="entry name" value="RIBOSOMAL RNA SMALL SUBUNIT METHYLTRANSFERASE J"/>
    <property type="match status" value="1"/>
</dbReference>
<dbReference type="PANTHER" id="PTHR36112:SF1">
    <property type="entry name" value="RIBOSOMAL RNA SMALL SUBUNIT METHYLTRANSFERASE J"/>
    <property type="match status" value="1"/>
</dbReference>
<dbReference type="Pfam" id="PF04445">
    <property type="entry name" value="SAM_MT"/>
    <property type="match status" value="1"/>
</dbReference>
<dbReference type="SUPFAM" id="SSF53335">
    <property type="entry name" value="S-adenosyl-L-methionine-dependent methyltransferases"/>
    <property type="match status" value="1"/>
</dbReference>
<feature type="chain" id="PRO_0000383390" description="Ribosomal RNA small subunit methyltransferase J">
    <location>
        <begin position="1"/>
        <end position="255"/>
    </location>
</feature>
<feature type="region of interest" description="Disordered" evidence="2">
    <location>
        <begin position="228"/>
        <end position="247"/>
    </location>
</feature>
<feature type="binding site" evidence="1">
    <location>
        <begin position="107"/>
        <end position="108"/>
    </location>
    <ligand>
        <name>S-adenosyl-L-methionine</name>
        <dbReference type="ChEBI" id="CHEBI:59789"/>
    </ligand>
</feature>
<feature type="binding site" evidence="1">
    <location>
        <begin position="123"/>
        <end position="124"/>
    </location>
    <ligand>
        <name>S-adenosyl-L-methionine</name>
        <dbReference type="ChEBI" id="CHEBI:59789"/>
    </ligand>
</feature>
<feature type="binding site" evidence="1">
    <location>
        <position position="178"/>
    </location>
    <ligand>
        <name>S-adenosyl-L-methionine</name>
        <dbReference type="ChEBI" id="CHEBI:59789"/>
    </ligand>
</feature>
<comment type="function">
    <text evidence="1">Specifically methylates the guanosine in position 1516 of 16S rRNA.</text>
</comment>
<comment type="catalytic activity">
    <reaction evidence="1">
        <text>guanosine(1516) in 16S rRNA + S-adenosyl-L-methionine = N(2)-methylguanosine(1516) in 16S rRNA + S-adenosyl-L-homocysteine + H(+)</text>
        <dbReference type="Rhea" id="RHEA:43220"/>
        <dbReference type="Rhea" id="RHEA-COMP:10412"/>
        <dbReference type="Rhea" id="RHEA-COMP:10413"/>
        <dbReference type="ChEBI" id="CHEBI:15378"/>
        <dbReference type="ChEBI" id="CHEBI:57856"/>
        <dbReference type="ChEBI" id="CHEBI:59789"/>
        <dbReference type="ChEBI" id="CHEBI:74269"/>
        <dbReference type="ChEBI" id="CHEBI:74481"/>
        <dbReference type="EC" id="2.1.1.242"/>
    </reaction>
</comment>
<comment type="subcellular location">
    <subcellularLocation>
        <location evidence="1">Cytoplasm</location>
    </subcellularLocation>
</comment>
<comment type="similarity">
    <text evidence="1">Belongs to the methyltransferase superfamily. RsmJ family.</text>
</comment>
<accession>B8GQ90</accession>
<gene>
    <name evidence="1" type="primary">rsmJ</name>
    <name type="ordered locus">Tgr7_1199</name>
</gene>
<proteinExistence type="inferred from homology"/>
<reference key="1">
    <citation type="journal article" date="2011" name="Stand. Genomic Sci.">
        <title>Complete genome sequence of 'Thioalkalivibrio sulfidophilus' HL-EbGr7.</title>
        <authorList>
            <person name="Muyzer G."/>
            <person name="Sorokin D.Y."/>
            <person name="Mavromatis K."/>
            <person name="Lapidus A."/>
            <person name="Clum A."/>
            <person name="Ivanova N."/>
            <person name="Pati A."/>
            <person name="d'Haeseleer P."/>
            <person name="Woyke T."/>
            <person name="Kyrpides N.C."/>
        </authorList>
    </citation>
    <scope>NUCLEOTIDE SEQUENCE [LARGE SCALE GENOMIC DNA]</scope>
    <source>
        <strain>HL-EbGR7</strain>
    </source>
</reference>
<keyword id="KW-0963">Cytoplasm</keyword>
<keyword id="KW-0489">Methyltransferase</keyword>
<keyword id="KW-1185">Reference proteome</keyword>
<keyword id="KW-0698">rRNA processing</keyword>
<keyword id="KW-0949">S-adenosyl-L-methionine</keyword>
<keyword id="KW-0808">Transferase</keyword>
<name>RSMJ_THISH</name>
<protein>
    <recommendedName>
        <fullName evidence="1">Ribosomal RNA small subunit methyltransferase J</fullName>
        <ecNumber evidence="1">2.1.1.242</ecNumber>
    </recommendedName>
    <alternativeName>
        <fullName evidence="1">16S rRNA m2G1516 methyltransferase</fullName>
    </alternativeName>
    <alternativeName>
        <fullName evidence="1">rRNA (guanine-N(2)-)-methyltransferase</fullName>
    </alternativeName>
</protein>